<name>MURD_CAMJJ</name>
<reference key="1">
    <citation type="submission" date="2006-12" db="EMBL/GenBank/DDBJ databases">
        <authorList>
            <person name="Fouts D.E."/>
            <person name="Nelson K.E."/>
            <person name="Sebastian Y."/>
        </authorList>
    </citation>
    <scope>NUCLEOTIDE SEQUENCE [LARGE SCALE GENOMIC DNA]</scope>
    <source>
        <strain>81-176</strain>
    </source>
</reference>
<proteinExistence type="inferred from homology"/>
<protein>
    <recommendedName>
        <fullName evidence="1">UDP-N-acetylmuramoylalanine--D-glutamate ligase</fullName>
        <ecNumber evidence="1">6.3.2.9</ecNumber>
    </recommendedName>
    <alternativeName>
        <fullName evidence="1">D-glutamic acid-adding enzyme</fullName>
    </alternativeName>
    <alternativeName>
        <fullName evidence="1">UDP-N-acetylmuramoyl-L-alanyl-D-glutamate synthetase</fullName>
    </alternativeName>
</protein>
<keyword id="KW-0067">ATP-binding</keyword>
<keyword id="KW-0131">Cell cycle</keyword>
<keyword id="KW-0132">Cell division</keyword>
<keyword id="KW-0133">Cell shape</keyword>
<keyword id="KW-0961">Cell wall biogenesis/degradation</keyword>
<keyword id="KW-0963">Cytoplasm</keyword>
<keyword id="KW-0436">Ligase</keyword>
<keyword id="KW-0547">Nucleotide-binding</keyword>
<keyword id="KW-0573">Peptidoglycan synthesis</keyword>
<dbReference type="EC" id="6.3.2.9" evidence="1"/>
<dbReference type="EMBL" id="CP000538">
    <property type="protein sequence ID" value="EAQ73380.1"/>
    <property type="molecule type" value="Genomic_DNA"/>
</dbReference>
<dbReference type="RefSeq" id="WP_002869269.1">
    <property type="nucleotide sequence ID" value="NC_008787.1"/>
</dbReference>
<dbReference type="SMR" id="A1VYE9"/>
<dbReference type="KEGG" id="cjj:CJJ81176_0458"/>
<dbReference type="eggNOG" id="COG0771">
    <property type="taxonomic scope" value="Bacteria"/>
</dbReference>
<dbReference type="HOGENOM" id="CLU_032540_2_0_7"/>
<dbReference type="UniPathway" id="UPA00219"/>
<dbReference type="Proteomes" id="UP000000646">
    <property type="component" value="Chromosome"/>
</dbReference>
<dbReference type="GO" id="GO:0005737">
    <property type="term" value="C:cytoplasm"/>
    <property type="evidence" value="ECO:0007669"/>
    <property type="project" value="UniProtKB-SubCell"/>
</dbReference>
<dbReference type="GO" id="GO:0005524">
    <property type="term" value="F:ATP binding"/>
    <property type="evidence" value="ECO:0007669"/>
    <property type="project" value="UniProtKB-UniRule"/>
</dbReference>
<dbReference type="GO" id="GO:0008764">
    <property type="term" value="F:UDP-N-acetylmuramoylalanine-D-glutamate ligase activity"/>
    <property type="evidence" value="ECO:0007669"/>
    <property type="project" value="UniProtKB-UniRule"/>
</dbReference>
<dbReference type="GO" id="GO:0051301">
    <property type="term" value="P:cell division"/>
    <property type="evidence" value="ECO:0007669"/>
    <property type="project" value="UniProtKB-KW"/>
</dbReference>
<dbReference type="GO" id="GO:0071555">
    <property type="term" value="P:cell wall organization"/>
    <property type="evidence" value="ECO:0007669"/>
    <property type="project" value="UniProtKB-KW"/>
</dbReference>
<dbReference type="GO" id="GO:0009252">
    <property type="term" value="P:peptidoglycan biosynthetic process"/>
    <property type="evidence" value="ECO:0007669"/>
    <property type="project" value="UniProtKB-UniRule"/>
</dbReference>
<dbReference type="GO" id="GO:0008360">
    <property type="term" value="P:regulation of cell shape"/>
    <property type="evidence" value="ECO:0007669"/>
    <property type="project" value="UniProtKB-KW"/>
</dbReference>
<dbReference type="Gene3D" id="3.90.190.20">
    <property type="entry name" value="Mur ligase, C-terminal domain"/>
    <property type="match status" value="1"/>
</dbReference>
<dbReference type="Gene3D" id="3.40.1190.10">
    <property type="entry name" value="Mur-like, catalytic domain"/>
    <property type="match status" value="1"/>
</dbReference>
<dbReference type="HAMAP" id="MF_00639">
    <property type="entry name" value="MurD"/>
    <property type="match status" value="1"/>
</dbReference>
<dbReference type="InterPro" id="IPR036565">
    <property type="entry name" value="Mur-like_cat_sf"/>
</dbReference>
<dbReference type="InterPro" id="IPR036615">
    <property type="entry name" value="Mur_ligase_C_dom_sf"/>
</dbReference>
<dbReference type="InterPro" id="IPR013221">
    <property type="entry name" value="Mur_ligase_cen"/>
</dbReference>
<dbReference type="InterPro" id="IPR005762">
    <property type="entry name" value="MurD"/>
</dbReference>
<dbReference type="NCBIfam" id="TIGR01087">
    <property type="entry name" value="murD"/>
    <property type="match status" value="1"/>
</dbReference>
<dbReference type="PANTHER" id="PTHR43692">
    <property type="entry name" value="UDP-N-ACETYLMURAMOYLALANINE--D-GLUTAMATE LIGASE"/>
    <property type="match status" value="1"/>
</dbReference>
<dbReference type="PANTHER" id="PTHR43692:SF1">
    <property type="entry name" value="UDP-N-ACETYLMURAMOYLALANINE--D-GLUTAMATE LIGASE"/>
    <property type="match status" value="1"/>
</dbReference>
<dbReference type="Pfam" id="PF08245">
    <property type="entry name" value="Mur_ligase_M"/>
    <property type="match status" value="1"/>
</dbReference>
<dbReference type="SUPFAM" id="SSF53623">
    <property type="entry name" value="MurD-like peptide ligases, catalytic domain"/>
    <property type="match status" value="1"/>
</dbReference>
<dbReference type="SUPFAM" id="SSF53244">
    <property type="entry name" value="MurD-like peptide ligases, peptide-binding domain"/>
    <property type="match status" value="1"/>
</dbReference>
<comment type="function">
    <text evidence="1">Cell wall formation. Catalyzes the addition of glutamate to the nucleotide precursor UDP-N-acetylmuramoyl-L-alanine (UMA).</text>
</comment>
<comment type="catalytic activity">
    <reaction evidence="1">
        <text>UDP-N-acetyl-alpha-D-muramoyl-L-alanine + D-glutamate + ATP = UDP-N-acetyl-alpha-D-muramoyl-L-alanyl-D-glutamate + ADP + phosphate + H(+)</text>
        <dbReference type="Rhea" id="RHEA:16429"/>
        <dbReference type="ChEBI" id="CHEBI:15378"/>
        <dbReference type="ChEBI" id="CHEBI:29986"/>
        <dbReference type="ChEBI" id="CHEBI:30616"/>
        <dbReference type="ChEBI" id="CHEBI:43474"/>
        <dbReference type="ChEBI" id="CHEBI:83898"/>
        <dbReference type="ChEBI" id="CHEBI:83900"/>
        <dbReference type="ChEBI" id="CHEBI:456216"/>
        <dbReference type="EC" id="6.3.2.9"/>
    </reaction>
</comment>
<comment type="pathway">
    <text evidence="1">Cell wall biogenesis; peptidoglycan biosynthesis.</text>
</comment>
<comment type="subcellular location">
    <subcellularLocation>
        <location evidence="1">Cytoplasm</location>
    </subcellularLocation>
</comment>
<comment type="similarity">
    <text evidence="1">Belongs to the MurCDEF family.</text>
</comment>
<organism>
    <name type="scientific">Campylobacter jejuni subsp. jejuni serotype O:23/36 (strain 81-176)</name>
    <dbReference type="NCBI Taxonomy" id="354242"/>
    <lineage>
        <taxon>Bacteria</taxon>
        <taxon>Pseudomonadati</taxon>
        <taxon>Campylobacterota</taxon>
        <taxon>Epsilonproteobacteria</taxon>
        <taxon>Campylobacterales</taxon>
        <taxon>Campylobacteraceae</taxon>
        <taxon>Campylobacter</taxon>
    </lineage>
</organism>
<sequence length="402" mass="45398">MKISLFGYGKTTRAIAENLVDKFGPFDIYDDHFIETKKDTLGNLLLNPNDFDDNLSDIEIPSPGFPPKHKLIQKAKNLQSEYDFFYDIMPKSVWISGTNGKTTTTQMATHLLSHIGAVMGGNVGTPLAELDPYAKLWILETSSFTLHYTHKAKPEIYALLPISPDHLSWHGSFDNYVQDKLSVLKRMNECDVAILPKIYANTPTKAHKISYEDEKDLAVKFGIDTEKISFKSPFLLDAIMALAIEKILLDTLSYELLNSFVMEKNKLEELKDSQNRLWVNDTKATNESAVMAALNRYKDKKIHLIIGGDDKGVDLSNLFDFMKNFNIELYAIGISTEKMLDYAKKANLKAYKCEVLSKAVNEISNHLRVNEVALLSPACASLDQFNSYAERGKVFKECVNKI</sequence>
<accession>A1VYE9</accession>
<evidence type="ECO:0000255" key="1">
    <source>
        <dbReference type="HAMAP-Rule" id="MF_00639"/>
    </source>
</evidence>
<feature type="chain" id="PRO_0000301420" description="UDP-N-acetylmuramoylalanine--D-glutamate ligase">
    <location>
        <begin position="1"/>
        <end position="402"/>
    </location>
</feature>
<feature type="binding site" evidence="1">
    <location>
        <begin position="97"/>
        <end position="103"/>
    </location>
    <ligand>
        <name>ATP</name>
        <dbReference type="ChEBI" id="CHEBI:30616"/>
    </ligand>
</feature>
<gene>
    <name evidence="1" type="primary">murD</name>
    <name type="ordered locus">CJJ81176_0458</name>
</gene>